<reference key="1">
    <citation type="journal article" date="2011" name="J. Bacteriol.">
        <title>Comparative genomics of 28 Salmonella enterica isolates: evidence for CRISPR-mediated adaptive sublineage evolution.</title>
        <authorList>
            <person name="Fricke W.F."/>
            <person name="Mammel M.K."/>
            <person name="McDermott P.F."/>
            <person name="Tartera C."/>
            <person name="White D.G."/>
            <person name="Leclerc J.E."/>
            <person name="Ravel J."/>
            <person name="Cebula T.A."/>
        </authorList>
    </citation>
    <scope>NUCLEOTIDE SEQUENCE [LARGE SCALE GENOMIC DNA]</scope>
    <source>
        <strain>SL476</strain>
    </source>
</reference>
<sequence length="572" mass="63540">MRTSQYLLSTLKETPADAEVISHQLMLRAGMIRKLASGLYTWLPTGLRVLKKVENIVREEMNNAGAIEVSMPVVQPADLWQESGRWEQYGPELLRFVDRGERPFVLGPTHEEVITDLVRNELSSYKQLPLNFFQIQTKFRDEVRPRFGVMRSREFLMKDAYSFHTSQESLQETYDAMYAAYSRIFSRMGLDFRAVQADTGSIGGNASHEFQVLAQSGEDDIVFSDVSDYAANIELAEAIAPQTPRAAATQEMTLVDTPNAKTIAELVEQFNLPIEKTVKTLLVKAVKDSKSPLVALLVRGDHELNEVKAEKLPHVASPLTFATEEEIRAVINAGPGSLGPVNMPIPVIIDRTVAAMSDFAAGANIDGKHYFGINWDRDVATPVVADIRNVVAGDPSPDGQGTLLIKRGIEVGHIFQLGTKYSEALKASVQGEDGRNQILTMGCYGIGVTRVVAAAIEQNFDERGIVWPDAIAPFQVAILPMNMHKSFRVQELAEKLYSELRAQGIEVLMDDRKERPGVMFADMELIGIPHTIVIGDRNLDNDDIEYKYRRSGEKSLIKTGDIVDYLVKAIKG</sequence>
<accession>B4TK70</accession>
<comment type="function">
    <text evidence="1">Catalyzes the attachment of proline to tRNA(Pro) in a two-step reaction: proline is first activated by ATP to form Pro-AMP and then transferred to the acceptor end of tRNA(Pro). As ProRS can inadvertently accommodate and process non-cognate amino acids such as alanine and cysteine, to avoid such errors it has two additional distinct editing activities against alanine. One activity is designated as 'pretransfer' editing and involves the tRNA(Pro)-independent hydrolysis of activated Ala-AMP. The other activity is designated 'posttransfer' editing and involves deacylation of mischarged Ala-tRNA(Pro). The misacylated Cys-tRNA(Pro) is not edited by ProRS.</text>
</comment>
<comment type="catalytic activity">
    <reaction evidence="1">
        <text>tRNA(Pro) + L-proline + ATP = L-prolyl-tRNA(Pro) + AMP + diphosphate</text>
        <dbReference type="Rhea" id="RHEA:14305"/>
        <dbReference type="Rhea" id="RHEA-COMP:9700"/>
        <dbReference type="Rhea" id="RHEA-COMP:9702"/>
        <dbReference type="ChEBI" id="CHEBI:30616"/>
        <dbReference type="ChEBI" id="CHEBI:33019"/>
        <dbReference type="ChEBI" id="CHEBI:60039"/>
        <dbReference type="ChEBI" id="CHEBI:78442"/>
        <dbReference type="ChEBI" id="CHEBI:78532"/>
        <dbReference type="ChEBI" id="CHEBI:456215"/>
        <dbReference type="EC" id="6.1.1.15"/>
    </reaction>
</comment>
<comment type="subunit">
    <text evidence="1">Homodimer.</text>
</comment>
<comment type="subcellular location">
    <subcellularLocation>
        <location evidence="1">Cytoplasm</location>
    </subcellularLocation>
</comment>
<comment type="domain">
    <text evidence="1">Consists of three domains: the N-terminal catalytic domain, the editing domain and the C-terminal anticodon-binding domain.</text>
</comment>
<comment type="similarity">
    <text evidence="1">Belongs to the class-II aminoacyl-tRNA synthetase family. ProS type 1 subfamily.</text>
</comment>
<keyword id="KW-0030">Aminoacyl-tRNA synthetase</keyword>
<keyword id="KW-0067">ATP-binding</keyword>
<keyword id="KW-0963">Cytoplasm</keyword>
<keyword id="KW-0436">Ligase</keyword>
<keyword id="KW-0547">Nucleotide-binding</keyword>
<keyword id="KW-0648">Protein biosynthesis</keyword>
<feature type="chain" id="PRO_1000199418" description="Proline--tRNA ligase">
    <location>
        <begin position="1"/>
        <end position="572"/>
    </location>
</feature>
<evidence type="ECO:0000255" key="1">
    <source>
        <dbReference type="HAMAP-Rule" id="MF_01569"/>
    </source>
</evidence>
<proteinExistence type="inferred from homology"/>
<name>SYP_SALHS</name>
<organism>
    <name type="scientific">Salmonella heidelberg (strain SL476)</name>
    <dbReference type="NCBI Taxonomy" id="454169"/>
    <lineage>
        <taxon>Bacteria</taxon>
        <taxon>Pseudomonadati</taxon>
        <taxon>Pseudomonadota</taxon>
        <taxon>Gammaproteobacteria</taxon>
        <taxon>Enterobacterales</taxon>
        <taxon>Enterobacteriaceae</taxon>
        <taxon>Salmonella</taxon>
    </lineage>
</organism>
<dbReference type="EC" id="6.1.1.15" evidence="1"/>
<dbReference type="EMBL" id="CP001120">
    <property type="protein sequence ID" value="ACF68125.1"/>
    <property type="molecule type" value="Genomic_DNA"/>
</dbReference>
<dbReference type="RefSeq" id="WP_001260683.1">
    <property type="nucleotide sequence ID" value="NC_011083.1"/>
</dbReference>
<dbReference type="SMR" id="B4TK70"/>
<dbReference type="KEGG" id="seh:SeHA_C0280"/>
<dbReference type="HOGENOM" id="CLU_016739_0_0_6"/>
<dbReference type="Proteomes" id="UP000001866">
    <property type="component" value="Chromosome"/>
</dbReference>
<dbReference type="GO" id="GO:0005829">
    <property type="term" value="C:cytosol"/>
    <property type="evidence" value="ECO:0007669"/>
    <property type="project" value="TreeGrafter"/>
</dbReference>
<dbReference type="GO" id="GO:0002161">
    <property type="term" value="F:aminoacyl-tRNA deacylase activity"/>
    <property type="evidence" value="ECO:0007669"/>
    <property type="project" value="InterPro"/>
</dbReference>
<dbReference type="GO" id="GO:0005524">
    <property type="term" value="F:ATP binding"/>
    <property type="evidence" value="ECO:0007669"/>
    <property type="project" value="UniProtKB-UniRule"/>
</dbReference>
<dbReference type="GO" id="GO:0004827">
    <property type="term" value="F:proline-tRNA ligase activity"/>
    <property type="evidence" value="ECO:0007669"/>
    <property type="project" value="UniProtKB-UniRule"/>
</dbReference>
<dbReference type="GO" id="GO:0006433">
    <property type="term" value="P:prolyl-tRNA aminoacylation"/>
    <property type="evidence" value="ECO:0007669"/>
    <property type="project" value="UniProtKB-UniRule"/>
</dbReference>
<dbReference type="CDD" id="cd04334">
    <property type="entry name" value="ProRS-INS"/>
    <property type="match status" value="1"/>
</dbReference>
<dbReference type="CDD" id="cd00861">
    <property type="entry name" value="ProRS_anticodon_short"/>
    <property type="match status" value="1"/>
</dbReference>
<dbReference type="CDD" id="cd00779">
    <property type="entry name" value="ProRS_core_prok"/>
    <property type="match status" value="1"/>
</dbReference>
<dbReference type="FunFam" id="3.30.930.10:FF:000012">
    <property type="entry name" value="Proline--tRNA ligase"/>
    <property type="match status" value="1"/>
</dbReference>
<dbReference type="FunFam" id="3.30.930.10:FF:000097">
    <property type="entry name" value="Proline--tRNA ligase"/>
    <property type="match status" value="1"/>
</dbReference>
<dbReference type="FunFam" id="3.40.50.800:FF:000006">
    <property type="entry name" value="Proline--tRNA ligase"/>
    <property type="match status" value="1"/>
</dbReference>
<dbReference type="FunFam" id="3.90.960.10:FF:000001">
    <property type="entry name" value="Proline--tRNA ligase"/>
    <property type="match status" value="1"/>
</dbReference>
<dbReference type="Gene3D" id="3.40.50.800">
    <property type="entry name" value="Anticodon-binding domain"/>
    <property type="match status" value="1"/>
</dbReference>
<dbReference type="Gene3D" id="3.30.930.10">
    <property type="entry name" value="Bira Bifunctional Protein, Domain 2"/>
    <property type="match status" value="2"/>
</dbReference>
<dbReference type="Gene3D" id="3.90.960.10">
    <property type="entry name" value="YbaK/aminoacyl-tRNA synthetase-associated domain"/>
    <property type="match status" value="1"/>
</dbReference>
<dbReference type="HAMAP" id="MF_01569">
    <property type="entry name" value="Pro_tRNA_synth_type1"/>
    <property type="match status" value="1"/>
</dbReference>
<dbReference type="InterPro" id="IPR002314">
    <property type="entry name" value="aa-tRNA-synt_IIb"/>
</dbReference>
<dbReference type="InterPro" id="IPR006195">
    <property type="entry name" value="aa-tRNA-synth_II"/>
</dbReference>
<dbReference type="InterPro" id="IPR045864">
    <property type="entry name" value="aa-tRNA-synth_II/BPL/LPL"/>
</dbReference>
<dbReference type="InterPro" id="IPR004154">
    <property type="entry name" value="Anticodon-bd"/>
</dbReference>
<dbReference type="InterPro" id="IPR036621">
    <property type="entry name" value="Anticodon-bd_dom_sf"/>
</dbReference>
<dbReference type="InterPro" id="IPR002316">
    <property type="entry name" value="Pro-tRNA-ligase_IIa"/>
</dbReference>
<dbReference type="InterPro" id="IPR004500">
    <property type="entry name" value="Pro-tRNA-synth_IIa_bac-type"/>
</dbReference>
<dbReference type="InterPro" id="IPR023717">
    <property type="entry name" value="Pro-tRNA-Synthase_IIa_type1"/>
</dbReference>
<dbReference type="InterPro" id="IPR050062">
    <property type="entry name" value="Pro-tRNA_synthetase"/>
</dbReference>
<dbReference type="InterPro" id="IPR044140">
    <property type="entry name" value="ProRS_anticodon_short"/>
</dbReference>
<dbReference type="InterPro" id="IPR033730">
    <property type="entry name" value="ProRS_core_prok"/>
</dbReference>
<dbReference type="InterPro" id="IPR036754">
    <property type="entry name" value="YbaK/aa-tRNA-synt-asso_dom_sf"/>
</dbReference>
<dbReference type="InterPro" id="IPR007214">
    <property type="entry name" value="YbaK/aa-tRNA-synth-assoc-dom"/>
</dbReference>
<dbReference type="NCBIfam" id="NF006625">
    <property type="entry name" value="PRK09194.1"/>
    <property type="match status" value="1"/>
</dbReference>
<dbReference type="NCBIfam" id="TIGR00409">
    <property type="entry name" value="proS_fam_II"/>
    <property type="match status" value="1"/>
</dbReference>
<dbReference type="PANTHER" id="PTHR42753">
    <property type="entry name" value="MITOCHONDRIAL RIBOSOME PROTEIN L39/PROLYL-TRNA LIGASE FAMILY MEMBER"/>
    <property type="match status" value="1"/>
</dbReference>
<dbReference type="PANTHER" id="PTHR42753:SF2">
    <property type="entry name" value="PROLINE--TRNA LIGASE"/>
    <property type="match status" value="1"/>
</dbReference>
<dbReference type="Pfam" id="PF03129">
    <property type="entry name" value="HGTP_anticodon"/>
    <property type="match status" value="1"/>
</dbReference>
<dbReference type="Pfam" id="PF00587">
    <property type="entry name" value="tRNA-synt_2b"/>
    <property type="match status" value="1"/>
</dbReference>
<dbReference type="Pfam" id="PF04073">
    <property type="entry name" value="tRNA_edit"/>
    <property type="match status" value="1"/>
</dbReference>
<dbReference type="PIRSF" id="PIRSF001535">
    <property type="entry name" value="ProRS_1"/>
    <property type="match status" value="1"/>
</dbReference>
<dbReference type="PRINTS" id="PR01046">
    <property type="entry name" value="TRNASYNTHPRO"/>
</dbReference>
<dbReference type="SUPFAM" id="SSF52954">
    <property type="entry name" value="Class II aaRS ABD-related"/>
    <property type="match status" value="1"/>
</dbReference>
<dbReference type="SUPFAM" id="SSF55681">
    <property type="entry name" value="Class II aaRS and biotin synthetases"/>
    <property type="match status" value="1"/>
</dbReference>
<dbReference type="SUPFAM" id="SSF55826">
    <property type="entry name" value="YbaK/ProRS associated domain"/>
    <property type="match status" value="1"/>
</dbReference>
<dbReference type="PROSITE" id="PS50862">
    <property type="entry name" value="AA_TRNA_LIGASE_II"/>
    <property type="match status" value="1"/>
</dbReference>
<gene>
    <name evidence="1" type="primary">proS</name>
    <name type="ordered locus">SeHA_C0280</name>
</gene>
<protein>
    <recommendedName>
        <fullName evidence="1">Proline--tRNA ligase</fullName>
        <ecNumber evidence="1">6.1.1.15</ecNumber>
    </recommendedName>
    <alternativeName>
        <fullName evidence="1">Prolyl-tRNA synthetase</fullName>
        <shortName evidence="1">ProRS</shortName>
    </alternativeName>
</protein>